<protein>
    <recommendedName>
        <fullName evidence="1">Small ribosomal subunit protein uS13</fullName>
    </recommendedName>
    <alternativeName>
        <fullName evidence="3">30S ribosomal protein S13</fullName>
    </alternativeName>
</protein>
<evidence type="ECO:0000255" key="1">
    <source>
        <dbReference type="HAMAP-Rule" id="MF_01315"/>
    </source>
</evidence>
<evidence type="ECO:0000256" key="2">
    <source>
        <dbReference type="SAM" id="MobiDB-lite"/>
    </source>
</evidence>
<evidence type="ECO:0000305" key="3"/>
<organism>
    <name type="scientific">Shewanella sp. (strain MR-4)</name>
    <dbReference type="NCBI Taxonomy" id="60480"/>
    <lineage>
        <taxon>Bacteria</taxon>
        <taxon>Pseudomonadati</taxon>
        <taxon>Pseudomonadota</taxon>
        <taxon>Gammaproteobacteria</taxon>
        <taxon>Alteromonadales</taxon>
        <taxon>Shewanellaceae</taxon>
        <taxon>Shewanella</taxon>
    </lineage>
</organism>
<dbReference type="EMBL" id="CP000446">
    <property type="protein sequence ID" value="ABI37302.1"/>
    <property type="molecule type" value="Genomic_DNA"/>
</dbReference>
<dbReference type="RefSeq" id="WP_011070630.1">
    <property type="nucleotide sequence ID" value="NC_008321.1"/>
</dbReference>
<dbReference type="SMR" id="Q0HNR5"/>
<dbReference type="GeneID" id="94726208"/>
<dbReference type="KEGG" id="she:Shewmr4_0221"/>
<dbReference type="HOGENOM" id="CLU_103849_1_2_6"/>
<dbReference type="GO" id="GO:0005829">
    <property type="term" value="C:cytosol"/>
    <property type="evidence" value="ECO:0007669"/>
    <property type="project" value="TreeGrafter"/>
</dbReference>
<dbReference type="GO" id="GO:0015935">
    <property type="term" value="C:small ribosomal subunit"/>
    <property type="evidence" value="ECO:0007669"/>
    <property type="project" value="TreeGrafter"/>
</dbReference>
<dbReference type="GO" id="GO:0019843">
    <property type="term" value="F:rRNA binding"/>
    <property type="evidence" value="ECO:0007669"/>
    <property type="project" value="UniProtKB-UniRule"/>
</dbReference>
<dbReference type="GO" id="GO:0003735">
    <property type="term" value="F:structural constituent of ribosome"/>
    <property type="evidence" value="ECO:0007669"/>
    <property type="project" value="InterPro"/>
</dbReference>
<dbReference type="GO" id="GO:0000049">
    <property type="term" value="F:tRNA binding"/>
    <property type="evidence" value="ECO:0007669"/>
    <property type="project" value="UniProtKB-UniRule"/>
</dbReference>
<dbReference type="GO" id="GO:0006412">
    <property type="term" value="P:translation"/>
    <property type="evidence" value="ECO:0007669"/>
    <property type="project" value="UniProtKB-UniRule"/>
</dbReference>
<dbReference type="FunFam" id="1.10.8.50:FF:000001">
    <property type="entry name" value="30S ribosomal protein S13"/>
    <property type="match status" value="1"/>
</dbReference>
<dbReference type="FunFam" id="4.10.910.10:FF:000001">
    <property type="entry name" value="30S ribosomal protein S13"/>
    <property type="match status" value="1"/>
</dbReference>
<dbReference type="Gene3D" id="1.10.8.50">
    <property type="match status" value="1"/>
</dbReference>
<dbReference type="Gene3D" id="4.10.910.10">
    <property type="entry name" value="30s ribosomal protein s13, domain 2"/>
    <property type="match status" value="1"/>
</dbReference>
<dbReference type="HAMAP" id="MF_01315">
    <property type="entry name" value="Ribosomal_uS13"/>
    <property type="match status" value="1"/>
</dbReference>
<dbReference type="InterPro" id="IPR027437">
    <property type="entry name" value="Rbsml_uS13_C"/>
</dbReference>
<dbReference type="InterPro" id="IPR001892">
    <property type="entry name" value="Ribosomal_uS13"/>
</dbReference>
<dbReference type="InterPro" id="IPR010979">
    <property type="entry name" value="Ribosomal_uS13-like_H2TH"/>
</dbReference>
<dbReference type="InterPro" id="IPR019980">
    <property type="entry name" value="Ribosomal_uS13_bac-type"/>
</dbReference>
<dbReference type="InterPro" id="IPR018269">
    <property type="entry name" value="Ribosomal_uS13_CS"/>
</dbReference>
<dbReference type="NCBIfam" id="TIGR03631">
    <property type="entry name" value="uS13_bact"/>
    <property type="match status" value="1"/>
</dbReference>
<dbReference type="PANTHER" id="PTHR10871">
    <property type="entry name" value="30S RIBOSOMAL PROTEIN S13/40S RIBOSOMAL PROTEIN S18"/>
    <property type="match status" value="1"/>
</dbReference>
<dbReference type="PANTHER" id="PTHR10871:SF1">
    <property type="entry name" value="SMALL RIBOSOMAL SUBUNIT PROTEIN US13M"/>
    <property type="match status" value="1"/>
</dbReference>
<dbReference type="Pfam" id="PF00416">
    <property type="entry name" value="Ribosomal_S13"/>
    <property type="match status" value="1"/>
</dbReference>
<dbReference type="PIRSF" id="PIRSF002134">
    <property type="entry name" value="Ribosomal_S13"/>
    <property type="match status" value="1"/>
</dbReference>
<dbReference type="SUPFAM" id="SSF46946">
    <property type="entry name" value="S13-like H2TH domain"/>
    <property type="match status" value="1"/>
</dbReference>
<dbReference type="PROSITE" id="PS00646">
    <property type="entry name" value="RIBOSOMAL_S13_1"/>
    <property type="match status" value="1"/>
</dbReference>
<dbReference type="PROSITE" id="PS50159">
    <property type="entry name" value="RIBOSOMAL_S13_2"/>
    <property type="match status" value="1"/>
</dbReference>
<reference key="1">
    <citation type="submission" date="2006-08" db="EMBL/GenBank/DDBJ databases">
        <title>Complete sequence of Shewanella sp. MR-4.</title>
        <authorList>
            <consortium name="US DOE Joint Genome Institute"/>
            <person name="Copeland A."/>
            <person name="Lucas S."/>
            <person name="Lapidus A."/>
            <person name="Barry K."/>
            <person name="Detter J.C."/>
            <person name="Glavina del Rio T."/>
            <person name="Hammon N."/>
            <person name="Israni S."/>
            <person name="Dalin E."/>
            <person name="Tice H."/>
            <person name="Pitluck S."/>
            <person name="Kiss H."/>
            <person name="Brettin T."/>
            <person name="Bruce D."/>
            <person name="Han C."/>
            <person name="Tapia R."/>
            <person name="Gilna P."/>
            <person name="Schmutz J."/>
            <person name="Larimer F."/>
            <person name="Land M."/>
            <person name="Hauser L."/>
            <person name="Kyrpides N."/>
            <person name="Mikhailova N."/>
            <person name="Nealson K."/>
            <person name="Konstantinidis K."/>
            <person name="Klappenbach J."/>
            <person name="Tiedje J."/>
            <person name="Richardson P."/>
        </authorList>
    </citation>
    <scope>NUCLEOTIDE SEQUENCE [LARGE SCALE GENOMIC DNA]</scope>
    <source>
        <strain>MR-4</strain>
    </source>
</reference>
<sequence length="118" mass="13321">MARIAGINIPDQKHTVIALTAIFGIGRTRARAICAATSIAETAKIKELSEAQIDTLREEVAKYLVEGDLRREISMNIKRLMDLGCYRGLRHRRSLPLRGQRTKTNARTRKGPRKPIKK</sequence>
<name>RS13_SHESM</name>
<accession>Q0HNR5</accession>
<feature type="chain" id="PRO_0000306707" description="Small ribosomal subunit protein uS13">
    <location>
        <begin position="1"/>
        <end position="118"/>
    </location>
</feature>
<feature type="region of interest" description="Disordered" evidence="2">
    <location>
        <begin position="94"/>
        <end position="118"/>
    </location>
</feature>
<keyword id="KW-0687">Ribonucleoprotein</keyword>
<keyword id="KW-0689">Ribosomal protein</keyword>
<keyword id="KW-0694">RNA-binding</keyword>
<keyword id="KW-0699">rRNA-binding</keyword>
<keyword id="KW-0820">tRNA-binding</keyword>
<comment type="function">
    <text evidence="1">Located at the top of the head of the 30S subunit, it contacts several helices of the 16S rRNA. In the 70S ribosome it contacts the 23S rRNA (bridge B1a) and protein L5 of the 50S subunit (bridge B1b), connecting the 2 subunits; these bridges are implicated in subunit movement. Contacts the tRNAs in the A and P-sites.</text>
</comment>
<comment type="subunit">
    <text evidence="1">Part of the 30S ribosomal subunit. Forms a loose heterodimer with protein S19. Forms two bridges to the 50S subunit in the 70S ribosome.</text>
</comment>
<comment type="similarity">
    <text evidence="1">Belongs to the universal ribosomal protein uS13 family.</text>
</comment>
<gene>
    <name evidence="1" type="primary">rpsM</name>
    <name type="ordered locus">Shewmr4_0221</name>
</gene>
<proteinExistence type="inferred from homology"/>